<name>Y890_METJA</name>
<protein>
    <recommendedName>
        <fullName>UPF0148 protein MJ0890</fullName>
    </recommendedName>
</protein>
<reference key="1">
    <citation type="journal article" date="1996" name="Science">
        <title>Complete genome sequence of the methanogenic archaeon, Methanococcus jannaschii.</title>
        <authorList>
            <person name="Bult C.J."/>
            <person name="White O."/>
            <person name="Olsen G.J."/>
            <person name="Zhou L."/>
            <person name="Fleischmann R.D."/>
            <person name="Sutton G.G."/>
            <person name="Blake J.A."/>
            <person name="FitzGerald L.M."/>
            <person name="Clayton R.A."/>
            <person name="Gocayne J.D."/>
            <person name="Kerlavage A.R."/>
            <person name="Dougherty B.A."/>
            <person name="Tomb J.-F."/>
            <person name="Adams M.D."/>
            <person name="Reich C.I."/>
            <person name="Overbeek R."/>
            <person name="Kirkness E.F."/>
            <person name="Weinstock K.G."/>
            <person name="Merrick J.M."/>
            <person name="Glodek A."/>
            <person name="Scott J.L."/>
            <person name="Geoghagen N.S.M."/>
            <person name="Weidman J.F."/>
            <person name="Fuhrmann J.L."/>
            <person name="Nguyen D."/>
            <person name="Utterback T.R."/>
            <person name="Kelley J.M."/>
            <person name="Peterson J.D."/>
            <person name="Sadow P.W."/>
            <person name="Hanna M.C."/>
            <person name="Cotton M.D."/>
            <person name="Roberts K.M."/>
            <person name="Hurst M.A."/>
            <person name="Kaine B.P."/>
            <person name="Borodovsky M."/>
            <person name="Klenk H.-P."/>
            <person name="Fraser C.M."/>
            <person name="Smith H.O."/>
            <person name="Woese C.R."/>
            <person name="Venter J.C."/>
        </authorList>
    </citation>
    <scope>NUCLEOTIDE SEQUENCE [LARGE SCALE GENOMIC DNA]</scope>
    <source>
        <strain>ATCC 43067 / DSM 2661 / JAL-1 / JCM 10045 / NBRC 100440</strain>
    </source>
</reference>
<evidence type="ECO:0000305" key="1"/>
<organism>
    <name type="scientific">Methanocaldococcus jannaschii (strain ATCC 43067 / DSM 2661 / JAL-1 / JCM 10045 / NBRC 100440)</name>
    <name type="common">Methanococcus jannaschii</name>
    <dbReference type="NCBI Taxonomy" id="243232"/>
    <lineage>
        <taxon>Archaea</taxon>
        <taxon>Methanobacteriati</taxon>
        <taxon>Methanobacteriota</taxon>
        <taxon>Methanomada group</taxon>
        <taxon>Methanococci</taxon>
        <taxon>Methanococcales</taxon>
        <taxon>Methanocaldococcaceae</taxon>
        <taxon>Methanocaldococcus</taxon>
    </lineage>
</organism>
<feature type="chain" id="PRO_0000159857" description="UPF0148 protein MJ0890">
    <location>
        <begin position="1"/>
        <end position="137"/>
    </location>
</feature>
<comment type="similarity">
    <text evidence="1">Belongs to the UPF0148 family.</text>
</comment>
<gene>
    <name type="ordered locus">MJ0890</name>
</gene>
<keyword id="KW-1185">Reference proteome</keyword>
<proteinExistence type="inferred from homology"/>
<accession>Q58300</accession>
<sequence>MIKTVIDNLCYNFGENMKNDDAIKVLSNELLKGAKMLSTHCSKCGCPLFEKDGKIYCPICEKLKNKETIEKGENEKEIKNEIERKKSEINEILDLNKVVMDKINYLVMKLKEEDEVSRIREIAEAIYVLIKLKKKIE</sequence>
<dbReference type="EMBL" id="L77117">
    <property type="protein sequence ID" value="AAB98906.1"/>
    <property type="molecule type" value="Genomic_DNA"/>
</dbReference>
<dbReference type="PIR" id="B64411">
    <property type="entry name" value="B64411"/>
</dbReference>
<dbReference type="SMR" id="Q58300"/>
<dbReference type="STRING" id="243232.MJ_0890"/>
<dbReference type="PaxDb" id="243232-MJ_0890"/>
<dbReference type="EnsemblBacteria" id="AAB98906">
    <property type="protein sequence ID" value="AAB98906"/>
    <property type="gene ID" value="MJ_0890"/>
</dbReference>
<dbReference type="KEGG" id="mja:MJ_0890"/>
<dbReference type="eggNOG" id="arCOG00578">
    <property type="taxonomic scope" value="Archaea"/>
</dbReference>
<dbReference type="HOGENOM" id="CLU_142653_2_0_2"/>
<dbReference type="InParanoid" id="Q58300"/>
<dbReference type="OrthoDB" id="26305at2157"/>
<dbReference type="Proteomes" id="UP000000805">
    <property type="component" value="Chromosome"/>
</dbReference>
<dbReference type="HAMAP" id="MF_00343">
    <property type="entry name" value="UPF0148"/>
    <property type="match status" value="1"/>
</dbReference>
<dbReference type="InterPro" id="IPR009563">
    <property type="entry name" value="SSSCA1"/>
</dbReference>
<dbReference type="InterPro" id="IPR022954">
    <property type="entry name" value="UPF0148"/>
</dbReference>
<dbReference type="InterPro" id="IPR051888">
    <property type="entry name" value="UPF0148_domain"/>
</dbReference>
<dbReference type="NCBIfam" id="NF001646">
    <property type="entry name" value="PRK00420.1-3"/>
    <property type="match status" value="1"/>
</dbReference>
<dbReference type="PANTHER" id="PTHR16537:SF1">
    <property type="entry name" value="PROTEIN ZNRD2"/>
    <property type="match status" value="1"/>
</dbReference>
<dbReference type="PANTHER" id="PTHR16537">
    <property type="entry name" value="SJOEGREN SYNDROME/SCLERODERMA AUTOANTIGEN 1"/>
    <property type="match status" value="1"/>
</dbReference>
<dbReference type="Pfam" id="PF06677">
    <property type="entry name" value="Auto_anti-p27"/>
    <property type="match status" value="1"/>
</dbReference>